<protein>
    <recommendedName>
        <fullName evidence="3">Protein GOLM2</fullName>
    </recommendedName>
    <alternativeName>
        <fullName>Cancer susceptibility candidate gene 4 protein homolog</fullName>
        <shortName>CASC4</shortName>
    </alternativeName>
    <alternativeName>
        <fullName evidence="3">Golgi membrane protein 2</fullName>
    </alternativeName>
</protein>
<organism>
    <name type="scientific">Gallus gallus</name>
    <name type="common">Chicken</name>
    <dbReference type="NCBI Taxonomy" id="9031"/>
    <lineage>
        <taxon>Eukaryota</taxon>
        <taxon>Metazoa</taxon>
        <taxon>Chordata</taxon>
        <taxon>Craniata</taxon>
        <taxon>Vertebrata</taxon>
        <taxon>Euteleostomi</taxon>
        <taxon>Archelosauria</taxon>
        <taxon>Archosauria</taxon>
        <taxon>Dinosauria</taxon>
        <taxon>Saurischia</taxon>
        <taxon>Theropoda</taxon>
        <taxon>Coelurosauria</taxon>
        <taxon>Aves</taxon>
        <taxon>Neognathae</taxon>
        <taxon>Galloanserae</taxon>
        <taxon>Galliformes</taxon>
        <taxon>Phasianidae</taxon>
        <taxon>Phasianinae</taxon>
        <taxon>Gallus</taxon>
    </lineage>
</organism>
<evidence type="ECO:0000255" key="1"/>
<evidence type="ECO:0000256" key="2">
    <source>
        <dbReference type="SAM" id="MobiDB-lite"/>
    </source>
</evidence>
<evidence type="ECO:0000305" key="3"/>
<dbReference type="EMBL" id="AJ720029">
    <property type="protein sequence ID" value="CAG31688.1"/>
    <property type="molecule type" value="mRNA"/>
</dbReference>
<dbReference type="RefSeq" id="NP_001025727.1">
    <property type="nucleotide sequence ID" value="NM_001030556.1"/>
</dbReference>
<dbReference type="SMR" id="Q5ZKQ5"/>
<dbReference type="FunCoup" id="Q5ZKQ5">
    <property type="interactions" value="339"/>
</dbReference>
<dbReference type="STRING" id="9031.ENSGALP00000051496"/>
<dbReference type="PaxDb" id="9031-ENSGALP00000013350"/>
<dbReference type="GeneID" id="415575"/>
<dbReference type="KEGG" id="gga:415575"/>
<dbReference type="CTD" id="415575"/>
<dbReference type="VEuPathDB" id="HostDB:geneid_415575"/>
<dbReference type="eggNOG" id="ENOG502QTYH">
    <property type="taxonomic scope" value="Eukaryota"/>
</dbReference>
<dbReference type="InParanoid" id="Q5ZKQ5"/>
<dbReference type="OrthoDB" id="10072022at2759"/>
<dbReference type="PhylomeDB" id="Q5ZKQ5"/>
<dbReference type="PRO" id="PR:Q5ZKQ5"/>
<dbReference type="Proteomes" id="UP000000539">
    <property type="component" value="Unassembled WGS sequence"/>
</dbReference>
<dbReference type="GO" id="GO:0016020">
    <property type="term" value="C:membrane"/>
    <property type="evidence" value="ECO:0007669"/>
    <property type="project" value="UniProtKB-SubCell"/>
</dbReference>
<dbReference type="InterPro" id="IPR026139">
    <property type="entry name" value="GOLM1/CASC4"/>
</dbReference>
<dbReference type="PANTHER" id="PTHR15896">
    <property type="entry name" value="GOLGI PHOSPHOPROTEIN 2/GP73-RELATED"/>
    <property type="match status" value="1"/>
</dbReference>
<dbReference type="PANTHER" id="PTHR15896:SF7">
    <property type="entry name" value="PROTEIN GOLM2"/>
    <property type="match status" value="1"/>
</dbReference>
<dbReference type="PRINTS" id="PR02084">
    <property type="entry name" value="GOLM1CASC4"/>
</dbReference>
<reference key="1">
    <citation type="journal article" date="2005" name="Genome Biol.">
        <title>Full-length cDNAs from chicken bursal lymphocytes to facilitate gene function analysis.</title>
        <authorList>
            <person name="Caldwell R.B."/>
            <person name="Kierzek A.M."/>
            <person name="Arakawa H."/>
            <person name="Bezzubov Y."/>
            <person name="Zaim J."/>
            <person name="Fiedler P."/>
            <person name="Kutter S."/>
            <person name="Blagodatski A."/>
            <person name="Kostovska D."/>
            <person name="Koter M."/>
            <person name="Plachy J."/>
            <person name="Carninci P."/>
            <person name="Hayashizaki Y."/>
            <person name="Buerstedde J.-M."/>
        </authorList>
    </citation>
    <scope>NUCLEOTIDE SEQUENCE [LARGE SCALE MRNA]</scope>
    <source>
        <strain>CB</strain>
        <tissue>Bursa of Fabricius</tissue>
    </source>
</reference>
<keyword id="KW-0175">Coiled coil</keyword>
<keyword id="KW-0472">Membrane</keyword>
<keyword id="KW-1185">Reference proteome</keyword>
<keyword id="KW-0735">Signal-anchor</keyword>
<keyword id="KW-0812">Transmembrane</keyword>
<keyword id="KW-1133">Transmembrane helix</keyword>
<accession>Q5ZKQ5</accession>
<comment type="subcellular location">
    <subcellularLocation>
        <location evidence="3">Membrane</location>
        <topology evidence="3">Single-pass type II membrane protein</topology>
    </subcellularLocation>
</comment>
<comment type="similarity">
    <text evidence="3">Belongs to the GOLM family.</text>
</comment>
<gene>
    <name type="primary">GOLM2</name>
    <name type="synonym">CASC4</name>
    <name type="ORF">RCJMB04_9k24</name>
</gene>
<proteinExistence type="evidence at transcript level"/>
<feature type="chain" id="PRO_0000291846" description="Protein GOLM2">
    <location>
        <begin position="1"/>
        <end position="375"/>
    </location>
</feature>
<feature type="topological domain" description="Cytoplasmic" evidence="1">
    <location>
        <begin position="1"/>
        <end position="12"/>
    </location>
</feature>
<feature type="transmembrane region" description="Helical; Signal-anchor for type II membrane protein" evidence="1">
    <location>
        <begin position="13"/>
        <end position="33"/>
    </location>
</feature>
<feature type="topological domain" description="Lumenal" evidence="1">
    <location>
        <begin position="34"/>
        <end position="375"/>
    </location>
</feature>
<feature type="region of interest" description="Disordered" evidence="2">
    <location>
        <begin position="81"/>
        <end position="102"/>
    </location>
</feature>
<feature type="region of interest" description="Disordered" evidence="2">
    <location>
        <begin position="193"/>
        <end position="327"/>
    </location>
</feature>
<feature type="region of interest" description="Disordered" evidence="2">
    <location>
        <begin position="342"/>
        <end position="375"/>
    </location>
</feature>
<feature type="coiled-coil region" evidence="1">
    <location>
        <begin position="34"/>
        <end position="198"/>
    </location>
</feature>
<feature type="compositionally biased region" description="Basic and acidic residues" evidence="2">
    <location>
        <begin position="193"/>
        <end position="204"/>
    </location>
</feature>
<feature type="compositionally biased region" description="Basic and acidic residues" evidence="2">
    <location>
        <begin position="350"/>
        <end position="375"/>
    </location>
</feature>
<sequence length="375" mass="42497">MVGFGANRRGGRLPSFLLAALLLVIAVLAFNCWNAASRQAVLREELAELQSQAKRTEVARGRLEKRNSDLLGRVDSHRKQLEQKEADYSQLSSQLQARDGQVKRCEDSRVKLQNNISYQMADIHRLKEQLAELRQEFIRQEDQLHEYKKNNTYLTRRLEYDSLQCGQQIKEMRIQHEENIKKLMDQIVREQKATQRIQSSKDAEVNPNGDNQPISKTVPEMEVKNAENNELPSDRVVNGKEKVKPGGDAGMPEIEDNDPAKAEDTPTAPRSDNHHQADVNLPTEQPHAPNLAPGLHGDSDGNADIAKEIPPNSLQHLNFGENMDSQNENKIEADHLKLQKGRAVGLQKMKQNDEERDLQNDLVDYSKPRFGDGVL</sequence>
<name>GOLM2_CHICK</name>